<sequence>MNKKVIYFLCTGNSCRSQMAEGWGKKYLGDEWDVYSAGIEAHGVNPNAVKAMKEIGIDISEQTSDTIDQELLQKADLVVTLCGHAADVCPATPSNKERVHWGFDDPAKAEGTDEEKWAVFRRVRDEIGKRIKTFAETGK</sequence>
<evidence type="ECO:0000255" key="1">
    <source>
        <dbReference type="HAMAP-Rule" id="MF_01624"/>
    </source>
</evidence>
<name>ARSC_HALH5</name>
<feature type="chain" id="PRO_0000162517" description="Arsenate reductase">
    <location>
        <begin position="1"/>
        <end position="139"/>
    </location>
</feature>
<feature type="active site" description="Nucleophile" evidence="1">
    <location>
        <position position="10"/>
    </location>
</feature>
<feature type="active site" description="Nucleophile" evidence="1">
    <location>
        <position position="82"/>
    </location>
</feature>
<feature type="active site" description="Nucleophile" evidence="1">
    <location>
        <position position="89"/>
    </location>
</feature>
<feature type="disulfide bond" description="Redox-active; alternate" evidence="1">
    <location>
        <begin position="10"/>
        <end position="82"/>
    </location>
</feature>
<feature type="disulfide bond" description="Redox-active; alternate" evidence="1">
    <location>
        <begin position="82"/>
        <end position="89"/>
    </location>
</feature>
<keyword id="KW-0059">Arsenical resistance</keyword>
<keyword id="KW-0963">Cytoplasm</keyword>
<keyword id="KW-1015">Disulfide bond</keyword>
<keyword id="KW-0560">Oxidoreductase</keyword>
<keyword id="KW-0676">Redox-active center</keyword>
<keyword id="KW-1185">Reference proteome</keyword>
<gene>
    <name evidence="1" type="primary">arsC</name>
    <name type="ordered locus">BH2998</name>
</gene>
<dbReference type="EC" id="1.20.4.4" evidence="1"/>
<dbReference type="EMBL" id="BA000004">
    <property type="protein sequence ID" value="BAB06717.1"/>
    <property type="molecule type" value="Genomic_DNA"/>
</dbReference>
<dbReference type="PIR" id="F84024">
    <property type="entry name" value="F84024"/>
</dbReference>
<dbReference type="RefSeq" id="WP_010899142.1">
    <property type="nucleotide sequence ID" value="NC_002570.2"/>
</dbReference>
<dbReference type="SMR" id="Q9K8K8"/>
<dbReference type="STRING" id="272558.gene:10728908"/>
<dbReference type="KEGG" id="bha:BH2998"/>
<dbReference type="eggNOG" id="COG0394">
    <property type="taxonomic scope" value="Bacteria"/>
</dbReference>
<dbReference type="HOGENOM" id="CLU_071415_3_2_9"/>
<dbReference type="OrthoDB" id="9784339at2"/>
<dbReference type="Proteomes" id="UP000001258">
    <property type="component" value="Chromosome"/>
</dbReference>
<dbReference type="GO" id="GO:0005737">
    <property type="term" value="C:cytoplasm"/>
    <property type="evidence" value="ECO:0007669"/>
    <property type="project" value="UniProtKB-SubCell"/>
</dbReference>
<dbReference type="GO" id="GO:0030612">
    <property type="term" value="F:arsenate reductase (thioredoxin) activity"/>
    <property type="evidence" value="ECO:0007669"/>
    <property type="project" value="UniProtKB-UniRule"/>
</dbReference>
<dbReference type="GO" id="GO:0004725">
    <property type="term" value="F:protein tyrosine phosphatase activity"/>
    <property type="evidence" value="ECO:0007669"/>
    <property type="project" value="InterPro"/>
</dbReference>
<dbReference type="GO" id="GO:0046685">
    <property type="term" value="P:response to arsenic-containing substance"/>
    <property type="evidence" value="ECO:0007669"/>
    <property type="project" value="UniProtKB-KW"/>
</dbReference>
<dbReference type="CDD" id="cd16345">
    <property type="entry name" value="LMWP_ArsC"/>
    <property type="match status" value="1"/>
</dbReference>
<dbReference type="FunFam" id="3.40.50.2300:FF:000237">
    <property type="entry name" value="Arsenate reductase"/>
    <property type="match status" value="1"/>
</dbReference>
<dbReference type="Gene3D" id="3.40.50.2300">
    <property type="match status" value="1"/>
</dbReference>
<dbReference type="HAMAP" id="MF_01624">
    <property type="entry name" value="Arsenate_reduct"/>
    <property type="match status" value="1"/>
</dbReference>
<dbReference type="InterPro" id="IPR014064">
    <property type="entry name" value="Arsenate_reductase_ArsC"/>
</dbReference>
<dbReference type="InterPro" id="IPR023485">
    <property type="entry name" value="Ptyr_pPase"/>
</dbReference>
<dbReference type="InterPro" id="IPR036196">
    <property type="entry name" value="Ptyr_pPase_sf"/>
</dbReference>
<dbReference type="NCBIfam" id="TIGR02691">
    <property type="entry name" value="arsC_pI258_fam"/>
    <property type="match status" value="1"/>
</dbReference>
<dbReference type="NCBIfam" id="NF010053">
    <property type="entry name" value="PRK13530.1"/>
    <property type="match status" value="1"/>
</dbReference>
<dbReference type="PANTHER" id="PTHR43428">
    <property type="entry name" value="ARSENATE REDUCTASE"/>
    <property type="match status" value="1"/>
</dbReference>
<dbReference type="PANTHER" id="PTHR43428:SF1">
    <property type="entry name" value="ARSENATE REDUCTASE"/>
    <property type="match status" value="1"/>
</dbReference>
<dbReference type="Pfam" id="PF01451">
    <property type="entry name" value="LMWPc"/>
    <property type="match status" value="1"/>
</dbReference>
<dbReference type="SMART" id="SM00226">
    <property type="entry name" value="LMWPc"/>
    <property type="match status" value="1"/>
</dbReference>
<dbReference type="SUPFAM" id="SSF52788">
    <property type="entry name" value="Phosphotyrosine protein phosphatases I"/>
    <property type="match status" value="1"/>
</dbReference>
<accession>Q9K8K8</accession>
<comment type="function">
    <text evidence="1">Catalyzes the reduction of arsenate [As(V)] to arsenite [As(III)].</text>
</comment>
<comment type="catalytic activity">
    <reaction evidence="1">
        <text>arsenate + [thioredoxin]-dithiol + H(+) = arsenite + [thioredoxin]-disulfide + H2O</text>
        <dbReference type="Rhea" id="RHEA:43848"/>
        <dbReference type="Rhea" id="RHEA-COMP:10698"/>
        <dbReference type="Rhea" id="RHEA-COMP:10700"/>
        <dbReference type="ChEBI" id="CHEBI:15377"/>
        <dbReference type="ChEBI" id="CHEBI:15378"/>
        <dbReference type="ChEBI" id="CHEBI:29242"/>
        <dbReference type="ChEBI" id="CHEBI:29950"/>
        <dbReference type="ChEBI" id="CHEBI:48597"/>
        <dbReference type="ChEBI" id="CHEBI:50058"/>
        <dbReference type="EC" id="1.20.4.4"/>
    </reaction>
</comment>
<comment type="subcellular location">
    <subcellularLocation>
        <location evidence="1">Cytoplasm</location>
    </subcellularLocation>
</comment>
<comment type="similarity">
    <text evidence="1">Belongs to the low molecular weight phosphotyrosine protein phosphatase family. Thioredoxin-coupled ArsC subfamily.</text>
</comment>
<proteinExistence type="inferred from homology"/>
<organism>
    <name type="scientific">Halalkalibacterium halodurans (strain ATCC BAA-125 / DSM 18197 / FERM 7344 / JCM 9153 / C-125)</name>
    <name type="common">Bacillus halodurans</name>
    <dbReference type="NCBI Taxonomy" id="272558"/>
    <lineage>
        <taxon>Bacteria</taxon>
        <taxon>Bacillati</taxon>
        <taxon>Bacillota</taxon>
        <taxon>Bacilli</taxon>
        <taxon>Bacillales</taxon>
        <taxon>Bacillaceae</taxon>
        <taxon>Halalkalibacterium (ex Joshi et al. 2022)</taxon>
    </lineage>
</organism>
<protein>
    <recommendedName>
        <fullName evidence="1">Arsenate reductase</fullName>
        <ecNumber evidence="1">1.20.4.4</ecNumber>
    </recommendedName>
</protein>
<reference key="1">
    <citation type="journal article" date="2000" name="Nucleic Acids Res.">
        <title>Complete genome sequence of the alkaliphilic bacterium Bacillus halodurans and genomic sequence comparison with Bacillus subtilis.</title>
        <authorList>
            <person name="Takami H."/>
            <person name="Nakasone K."/>
            <person name="Takaki Y."/>
            <person name="Maeno G."/>
            <person name="Sasaki R."/>
            <person name="Masui N."/>
            <person name="Fuji F."/>
            <person name="Hirama C."/>
            <person name="Nakamura Y."/>
            <person name="Ogasawara N."/>
            <person name="Kuhara S."/>
            <person name="Horikoshi K."/>
        </authorList>
    </citation>
    <scope>NUCLEOTIDE SEQUENCE [LARGE SCALE GENOMIC DNA]</scope>
    <source>
        <strain>ATCC BAA-125 / DSM 18197 / FERM 7344 / JCM 9153 / C-125</strain>
    </source>
</reference>